<sequence length="827" mass="91324">MWFWSRDPARDFPYDVTGEREELPAGWGVQKGKKKTGGDAVSVFTYEIRPGAEEQTQAAKTALKRIKTLKHPNILSYVDGLETDKCLYIVTEPVTPLGTYVKLRTDSGGVSELEISWGLHQIVKALSFLVNDGNLIHNNVCMSAVFVDRAGEWKLGGLDYMYTAGAEDTAPLKGIEMEKYNPPEKTDRSKTSKEKWSADMWCLGCLIWEVFNGPLPRPTALRSLGKIPKSLVPHYCELVGANPKVRPNPARFLQNCRSPGGFFCNSFVETNLFLEEIQIKDPAEKQTFFEQLSENLDSFPEDFCRHKILPQLLTAFEFGSAGAVVLPPLFKIGKFLNADEYQQKIIPVVVKMFSSTDRAMRIRLLQQMENFIQYLNEPTVNAQIFPHVVHGFMDTNPAIREQTVKSMLLLAPKLNENNLNMELMKHFARLQARDDQGPIRCNTTVCLGKIAPYLNPATRQRVLISAFSRATKDPFSPSRAAGVLGFAATHNFYSLTDCAGKVLPVLCGVTVDPEKNVREQAFKAIRSFLDKLETVSEDPSQLAELEKDVHTASVSPSVVGGWAGWAVTGVSSLTSKFIRTGGGAQDAAASEGASAPSTASEASKPDTAPSSSAPPAAASTAPTSYEPEEEKGAPDNSLDRWDDEDWGSLEDAEQNRGQTENDDWDTDWGHGKTQEKTVDFSSSRSKTKQVSPPPNRTSALDDGWGWDDAFQTVPPSKEHTASKSQQLEGTRPASDYNWDTSGSSGRQGDFFASLSEPSSQKNDNRNSDSAGDWGGDDNWESVEADQGLSKAEMARKKREERQKEIEAKRAERRAAKGPLKLGVRKLD</sequence>
<proteinExistence type="evidence at transcript level"/>
<feature type="chain" id="PRO_0000249545" description="N-terminal kinase-like protein">
    <location>
        <begin position="1"/>
        <end position="827"/>
    </location>
</feature>
<feature type="domain" description="Protein kinase" evidence="3">
    <location>
        <begin position="1"/>
        <end position="309"/>
    </location>
</feature>
<feature type="repeat" description="HEAT 1">
    <location>
        <begin position="345"/>
        <end position="383"/>
    </location>
</feature>
<feature type="repeat" description="HEAT 2">
    <location>
        <begin position="384"/>
        <end position="422"/>
    </location>
</feature>
<feature type="repeat" description="HEAT 3">
    <location>
        <begin position="502"/>
        <end position="540"/>
    </location>
</feature>
<feature type="region of interest" description="Disordered" evidence="4">
    <location>
        <begin position="586"/>
        <end position="827"/>
    </location>
</feature>
<feature type="coiled-coil region" evidence="2">
    <location>
        <begin position="788"/>
        <end position="817"/>
    </location>
</feature>
<feature type="compositionally biased region" description="Low complexity" evidence="4">
    <location>
        <begin position="586"/>
        <end position="624"/>
    </location>
</feature>
<feature type="compositionally biased region" description="Basic and acidic residues" evidence="4">
    <location>
        <begin position="630"/>
        <end position="640"/>
    </location>
</feature>
<feature type="compositionally biased region" description="Acidic residues" evidence="4">
    <location>
        <begin position="641"/>
        <end position="652"/>
    </location>
</feature>
<feature type="compositionally biased region" description="Basic and acidic residues" evidence="4">
    <location>
        <begin position="667"/>
        <end position="678"/>
    </location>
</feature>
<feature type="compositionally biased region" description="Polar residues" evidence="4">
    <location>
        <begin position="679"/>
        <end position="690"/>
    </location>
</feature>
<feature type="compositionally biased region" description="Polar residues" evidence="4">
    <location>
        <begin position="737"/>
        <end position="746"/>
    </location>
</feature>
<feature type="compositionally biased region" description="Acidic residues" evidence="4">
    <location>
        <begin position="774"/>
        <end position="783"/>
    </location>
</feature>
<feature type="compositionally biased region" description="Basic and acidic residues" evidence="4">
    <location>
        <begin position="792"/>
        <end position="814"/>
    </location>
</feature>
<gene>
    <name type="primary">scyl1</name>
    <name type="ORF">TEgg006d23.1</name>
</gene>
<accession>Q28FH2</accession>
<accession>A4QNQ1</accession>
<keyword id="KW-0175">Coiled coil</keyword>
<keyword id="KW-1185">Reference proteome</keyword>
<keyword id="KW-0677">Repeat</keyword>
<name>SCYL1_XENTR</name>
<evidence type="ECO:0000250" key="1">
    <source>
        <dbReference type="UniProtKB" id="Q96KG9"/>
    </source>
</evidence>
<evidence type="ECO:0000255" key="2"/>
<evidence type="ECO:0000255" key="3">
    <source>
        <dbReference type="PROSITE-ProRule" id="PRU00159"/>
    </source>
</evidence>
<evidence type="ECO:0000256" key="4">
    <source>
        <dbReference type="SAM" id="MobiDB-lite"/>
    </source>
</evidence>
<evidence type="ECO:0000305" key="5"/>
<dbReference type="EMBL" id="CR761974">
    <property type="protein sequence ID" value="CAJ81390.1"/>
    <property type="molecule type" value="mRNA"/>
</dbReference>
<dbReference type="EMBL" id="BC136057">
    <property type="protein sequence ID" value="AAI36058.1"/>
    <property type="molecule type" value="mRNA"/>
</dbReference>
<dbReference type="RefSeq" id="NP_001016149.1">
    <property type="nucleotide sequence ID" value="NM_001016149.2"/>
</dbReference>
<dbReference type="SMR" id="Q28FH2"/>
<dbReference type="FunCoup" id="Q28FH2">
    <property type="interactions" value="3864"/>
</dbReference>
<dbReference type="STRING" id="8364.ENSXETP00000015278"/>
<dbReference type="PaxDb" id="8364-ENSXETP00000050005"/>
<dbReference type="DNASU" id="548903"/>
<dbReference type="GeneID" id="548903"/>
<dbReference type="KEGG" id="xtr:548903"/>
<dbReference type="AGR" id="Xenbase:XB-GENE-5843537"/>
<dbReference type="CTD" id="57410"/>
<dbReference type="Xenbase" id="XB-GENE-5843537">
    <property type="gene designation" value="scyl1"/>
</dbReference>
<dbReference type="eggNOG" id="KOG1243">
    <property type="taxonomic scope" value="Eukaryota"/>
</dbReference>
<dbReference type="HOGENOM" id="CLU_010392_0_1_1"/>
<dbReference type="InParanoid" id="Q28FH2"/>
<dbReference type="OMA" id="NDTSWAG"/>
<dbReference type="OrthoDB" id="447103at2759"/>
<dbReference type="PhylomeDB" id="Q28FH2"/>
<dbReference type="Proteomes" id="UP000008143">
    <property type="component" value="Chromosome 4"/>
</dbReference>
<dbReference type="Bgee" id="ENSXETG00000023113">
    <property type="expression patterns" value="Expressed in 2-cell stage embryo and 14 other cell types or tissues"/>
</dbReference>
<dbReference type="ExpressionAtlas" id="Q28FH2">
    <property type="expression patterns" value="differential"/>
</dbReference>
<dbReference type="GO" id="GO:0005524">
    <property type="term" value="F:ATP binding"/>
    <property type="evidence" value="ECO:0007669"/>
    <property type="project" value="InterPro"/>
</dbReference>
<dbReference type="GO" id="GO:0004672">
    <property type="term" value="F:protein kinase activity"/>
    <property type="evidence" value="ECO:0007669"/>
    <property type="project" value="InterPro"/>
</dbReference>
<dbReference type="FunFam" id="1.25.10.10:FF:000108">
    <property type="entry name" value="N-terminal kinase-like protein isoform X1"/>
    <property type="match status" value="1"/>
</dbReference>
<dbReference type="Gene3D" id="1.25.10.10">
    <property type="entry name" value="Leucine-rich Repeat Variant"/>
    <property type="match status" value="1"/>
</dbReference>
<dbReference type="Gene3D" id="3.30.200.20">
    <property type="entry name" value="Phosphorylase Kinase, domain 1"/>
    <property type="match status" value="1"/>
</dbReference>
<dbReference type="Gene3D" id="1.10.510.10">
    <property type="entry name" value="Transferase(Phosphotransferase) domain 1"/>
    <property type="match status" value="1"/>
</dbReference>
<dbReference type="InterPro" id="IPR011989">
    <property type="entry name" value="ARM-like"/>
</dbReference>
<dbReference type="InterPro" id="IPR016024">
    <property type="entry name" value="ARM-type_fold"/>
</dbReference>
<dbReference type="InterPro" id="IPR051177">
    <property type="entry name" value="CIK-Related_Protein"/>
</dbReference>
<dbReference type="InterPro" id="IPR021133">
    <property type="entry name" value="HEAT_type_2"/>
</dbReference>
<dbReference type="InterPro" id="IPR011009">
    <property type="entry name" value="Kinase-like_dom_sf"/>
</dbReference>
<dbReference type="InterPro" id="IPR000719">
    <property type="entry name" value="Prot_kinase_dom"/>
</dbReference>
<dbReference type="PANTHER" id="PTHR12984:SF3">
    <property type="entry name" value="N-TERMINAL KINASE-LIKE PROTEIN"/>
    <property type="match status" value="1"/>
</dbReference>
<dbReference type="PANTHER" id="PTHR12984">
    <property type="entry name" value="SCY1-RELATED S/T PROTEIN KINASE-LIKE"/>
    <property type="match status" value="1"/>
</dbReference>
<dbReference type="Pfam" id="PF00069">
    <property type="entry name" value="Pkinase"/>
    <property type="match status" value="1"/>
</dbReference>
<dbReference type="SMART" id="SM00220">
    <property type="entry name" value="S_TKc"/>
    <property type="match status" value="1"/>
</dbReference>
<dbReference type="SUPFAM" id="SSF48371">
    <property type="entry name" value="ARM repeat"/>
    <property type="match status" value="1"/>
</dbReference>
<dbReference type="SUPFAM" id="SSF56112">
    <property type="entry name" value="Protein kinase-like (PK-like)"/>
    <property type="match status" value="1"/>
</dbReference>
<dbReference type="PROSITE" id="PS50077">
    <property type="entry name" value="HEAT_REPEAT"/>
    <property type="match status" value="1"/>
</dbReference>
<dbReference type="PROSITE" id="PS50011">
    <property type="entry name" value="PROTEIN_KINASE_DOM"/>
    <property type="match status" value="1"/>
</dbReference>
<protein>
    <recommendedName>
        <fullName>N-terminal kinase-like protein</fullName>
    </recommendedName>
    <alternativeName>
        <fullName>SCY1-like protein 1</fullName>
    </alternativeName>
</protein>
<reference key="1">
    <citation type="submission" date="2006-06" db="EMBL/GenBank/DDBJ databases">
        <authorList>
            <consortium name="Sanger Xenopus tropicalis EST/cDNA project"/>
        </authorList>
    </citation>
    <scope>NUCLEOTIDE SEQUENCE [LARGE SCALE MRNA]</scope>
    <source>
        <tissue>Egg</tissue>
    </source>
</reference>
<reference key="2">
    <citation type="submission" date="2007-03" db="EMBL/GenBank/DDBJ databases">
        <authorList>
            <consortium name="NIH - Xenopus Gene Collection (XGC) project"/>
        </authorList>
    </citation>
    <scope>NUCLEOTIDE SEQUENCE [LARGE SCALE MRNA]</scope>
    <source>
        <tissue>Brain</tissue>
    </source>
</reference>
<organism>
    <name type="scientific">Xenopus tropicalis</name>
    <name type="common">Western clawed frog</name>
    <name type="synonym">Silurana tropicalis</name>
    <dbReference type="NCBI Taxonomy" id="8364"/>
    <lineage>
        <taxon>Eukaryota</taxon>
        <taxon>Metazoa</taxon>
        <taxon>Chordata</taxon>
        <taxon>Craniata</taxon>
        <taxon>Vertebrata</taxon>
        <taxon>Euteleostomi</taxon>
        <taxon>Amphibia</taxon>
        <taxon>Batrachia</taxon>
        <taxon>Anura</taxon>
        <taxon>Pipoidea</taxon>
        <taxon>Pipidae</taxon>
        <taxon>Xenopodinae</taxon>
        <taxon>Xenopus</taxon>
        <taxon>Silurana</taxon>
    </lineage>
</organism>
<comment type="function">
    <text evidence="1">Regulates COPI-mediated retrograde protein traffic at the interface between the Golgi apparatus and the endoplasmic reticulum. Involved in the maintenance of the Golgi apparatus morphology.</text>
</comment>
<comment type="domain">
    <text evidence="3">The protein kinase domain is predicted to be catalytically inactive.</text>
</comment>
<comment type="similarity">
    <text evidence="5">Belongs to the protein kinase superfamily.</text>
</comment>